<name>DUS3_MOUSE</name>
<keyword id="KW-0002">3D-structure</keyword>
<keyword id="KW-0966">Cell projection</keyword>
<keyword id="KW-0969">Cilium</keyword>
<keyword id="KW-0963">Cytoplasm</keyword>
<keyword id="KW-0206">Cytoskeleton</keyword>
<keyword id="KW-0903">Direct protein sequencing</keyword>
<keyword id="KW-0282">Flagellum</keyword>
<keyword id="KW-0378">Hydrolase</keyword>
<keyword id="KW-0539">Nucleus</keyword>
<keyword id="KW-0904">Protein phosphatase</keyword>
<keyword id="KW-1185">Reference proteome</keyword>
<gene>
    <name type="primary">Dusp3</name>
</gene>
<feature type="chain" id="PRO_0000094796" description="Dual specificity protein phosphatase 3">
    <location>
        <begin position="1"/>
        <end position="185"/>
    </location>
</feature>
<feature type="domain" description="Tyrosine-protein phosphatase" evidence="1">
    <location>
        <begin position="28"/>
        <end position="179"/>
    </location>
</feature>
<feature type="active site" description="Phosphocysteine intermediate" evidence="1">
    <location>
        <position position="124"/>
    </location>
</feature>
<sequence length="185" mass="20472">MSSSFELSVQDLNDLLSDGSGCYSLPSQPCNEVVPRVYVGNASVAQDITQLQKLGITHVLNAAEGRSFMHVNTSASFYEDSGITYLGIKANDTQEFNLSAYFERATDFIDQALAHKNGRVLVHCREGYSRSPTLVIAYLMMRQKMDVKSALSTVRQNREIGPNDGFLAQLCQLNDRLAKEGKVKL</sequence>
<reference key="1">
    <citation type="submission" date="2000-06" db="EMBL/GenBank/DDBJ databases">
        <title>Molecular cloning and characterization of novel putative dual specificity protein phosphatases T-DSP6 and T-DSP11 with low molecular masses containing a single catalytic domain but not cdc25 homology domain.</title>
        <authorList>
            <person name="Aoyama K."/>
            <person name="Matsuda T."/>
            <person name="Aoki N."/>
        </authorList>
    </citation>
    <scope>NUCLEOTIDE SEQUENCE [MRNA]</scope>
</reference>
<reference key="2">
    <citation type="journal article" date="2005" name="Science">
        <title>The transcriptional landscape of the mammalian genome.</title>
        <authorList>
            <person name="Carninci P."/>
            <person name="Kasukawa T."/>
            <person name="Katayama S."/>
            <person name="Gough J."/>
            <person name="Frith M.C."/>
            <person name="Maeda N."/>
            <person name="Oyama R."/>
            <person name="Ravasi T."/>
            <person name="Lenhard B."/>
            <person name="Wells C."/>
            <person name="Kodzius R."/>
            <person name="Shimokawa K."/>
            <person name="Bajic V.B."/>
            <person name="Brenner S.E."/>
            <person name="Batalov S."/>
            <person name="Forrest A.R."/>
            <person name="Zavolan M."/>
            <person name="Davis M.J."/>
            <person name="Wilming L.G."/>
            <person name="Aidinis V."/>
            <person name="Allen J.E."/>
            <person name="Ambesi-Impiombato A."/>
            <person name="Apweiler R."/>
            <person name="Aturaliya R.N."/>
            <person name="Bailey T.L."/>
            <person name="Bansal M."/>
            <person name="Baxter L."/>
            <person name="Beisel K.W."/>
            <person name="Bersano T."/>
            <person name="Bono H."/>
            <person name="Chalk A.M."/>
            <person name="Chiu K.P."/>
            <person name="Choudhary V."/>
            <person name="Christoffels A."/>
            <person name="Clutterbuck D.R."/>
            <person name="Crowe M.L."/>
            <person name="Dalla E."/>
            <person name="Dalrymple B.P."/>
            <person name="de Bono B."/>
            <person name="Della Gatta G."/>
            <person name="di Bernardo D."/>
            <person name="Down T."/>
            <person name="Engstrom P."/>
            <person name="Fagiolini M."/>
            <person name="Faulkner G."/>
            <person name="Fletcher C.F."/>
            <person name="Fukushima T."/>
            <person name="Furuno M."/>
            <person name="Futaki S."/>
            <person name="Gariboldi M."/>
            <person name="Georgii-Hemming P."/>
            <person name="Gingeras T.R."/>
            <person name="Gojobori T."/>
            <person name="Green R.E."/>
            <person name="Gustincich S."/>
            <person name="Harbers M."/>
            <person name="Hayashi Y."/>
            <person name="Hensch T.K."/>
            <person name="Hirokawa N."/>
            <person name="Hill D."/>
            <person name="Huminiecki L."/>
            <person name="Iacono M."/>
            <person name="Ikeo K."/>
            <person name="Iwama A."/>
            <person name="Ishikawa T."/>
            <person name="Jakt M."/>
            <person name="Kanapin A."/>
            <person name="Katoh M."/>
            <person name="Kawasawa Y."/>
            <person name="Kelso J."/>
            <person name="Kitamura H."/>
            <person name="Kitano H."/>
            <person name="Kollias G."/>
            <person name="Krishnan S.P."/>
            <person name="Kruger A."/>
            <person name="Kummerfeld S.K."/>
            <person name="Kurochkin I.V."/>
            <person name="Lareau L.F."/>
            <person name="Lazarevic D."/>
            <person name="Lipovich L."/>
            <person name="Liu J."/>
            <person name="Liuni S."/>
            <person name="McWilliam S."/>
            <person name="Madan Babu M."/>
            <person name="Madera M."/>
            <person name="Marchionni L."/>
            <person name="Matsuda H."/>
            <person name="Matsuzawa S."/>
            <person name="Miki H."/>
            <person name="Mignone F."/>
            <person name="Miyake S."/>
            <person name="Morris K."/>
            <person name="Mottagui-Tabar S."/>
            <person name="Mulder N."/>
            <person name="Nakano N."/>
            <person name="Nakauchi H."/>
            <person name="Ng P."/>
            <person name="Nilsson R."/>
            <person name="Nishiguchi S."/>
            <person name="Nishikawa S."/>
            <person name="Nori F."/>
            <person name="Ohara O."/>
            <person name="Okazaki Y."/>
            <person name="Orlando V."/>
            <person name="Pang K.C."/>
            <person name="Pavan W.J."/>
            <person name="Pavesi G."/>
            <person name="Pesole G."/>
            <person name="Petrovsky N."/>
            <person name="Piazza S."/>
            <person name="Reed J."/>
            <person name="Reid J.F."/>
            <person name="Ring B.Z."/>
            <person name="Ringwald M."/>
            <person name="Rost B."/>
            <person name="Ruan Y."/>
            <person name="Salzberg S.L."/>
            <person name="Sandelin A."/>
            <person name="Schneider C."/>
            <person name="Schoenbach C."/>
            <person name="Sekiguchi K."/>
            <person name="Semple C.A."/>
            <person name="Seno S."/>
            <person name="Sessa L."/>
            <person name="Sheng Y."/>
            <person name="Shibata Y."/>
            <person name="Shimada H."/>
            <person name="Shimada K."/>
            <person name="Silva D."/>
            <person name="Sinclair B."/>
            <person name="Sperling S."/>
            <person name="Stupka E."/>
            <person name="Sugiura K."/>
            <person name="Sultana R."/>
            <person name="Takenaka Y."/>
            <person name="Taki K."/>
            <person name="Tammoja K."/>
            <person name="Tan S.L."/>
            <person name="Tang S."/>
            <person name="Taylor M.S."/>
            <person name="Tegner J."/>
            <person name="Teichmann S.A."/>
            <person name="Ueda H.R."/>
            <person name="van Nimwegen E."/>
            <person name="Verardo R."/>
            <person name="Wei C.L."/>
            <person name="Yagi K."/>
            <person name="Yamanishi H."/>
            <person name="Zabarovsky E."/>
            <person name="Zhu S."/>
            <person name="Zimmer A."/>
            <person name="Hide W."/>
            <person name="Bult C."/>
            <person name="Grimmond S.M."/>
            <person name="Teasdale R.D."/>
            <person name="Liu E.T."/>
            <person name="Brusic V."/>
            <person name="Quackenbush J."/>
            <person name="Wahlestedt C."/>
            <person name="Mattick J.S."/>
            <person name="Hume D.A."/>
            <person name="Kai C."/>
            <person name="Sasaki D."/>
            <person name="Tomaru Y."/>
            <person name="Fukuda S."/>
            <person name="Kanamori-Katayama M."/>
            <person name="Suzuki M."/>
            <person name="Aoki J."/>
            <person name="Arakawa T."/>
            <person name="Iida J."/>
            <person name="Imamura K."/>
            <person name="Itoh M."/>
            <person name="Kato T."/>
            <person name="Kawaji H."/>
            <person name="Kawagashira N."/>
            <person name="Kawashima T."/>
            <person name="Kojima M."/>
            <person name="Kondo S."/>
            <person name="Konno H."/>
            <person name="Nakano K."/>
            <person name="Ninomiya N."/>
            <person name="Nishio T."/>
            <person name="Okada M."/>
            <person name="Plessy C."/>
            <person name="Shibata K."/>
            <person name="Shiraki T."/>
            <person name="Suzuki S."/>
            <person name="Tagami M."/>
            <person name="Waki K."/>
            <person name="Watahiki A."/>
            <person name="Okamura-Oho Y."/>
            <person name="Suzuki H."/>
            <person name="Kawai J."/>
            <person name="Hayashizaki Y."/>
        </authorList>
    </citation>
    <scope>NUCLEOTIDE SEQUENCE [LARGE SCALE MRNA]</scope>
    <source>
        <strain>C57BL/6J</strain>
        <tissue>Stomach</tissue>
    </source>
</reference>
<reference key="3">
    <citation type="journal article" date="2004" name="Genome Res.">
        <title>The status, quality, and expansion of the NIH full-length cDNA project: the Mammalian Gene Collection (MGC).</title>
        <authorList>
            <consortium name="The MGC Project Team"/>
        </authorList>
    </citation>
    <scope>NUCLEOTIDE SEQUENCE [LARGE SCALE MRNA]</scope>
</reference>
<reference key="4">
    <citation type="submission" date="2007-03" db="UniProtKB">
        <authorList>
            <person name="Lubec G."/>
            <person name="Klug S."/>
        </authorList>
    </citation>
    <scope>PROTEIN SEQUENCE OF 90-104 AND 159-176</scope>
    <scope>IDENTIFICATION BY MASS SPECTROMETRY</scope>
    <source>
        <tissue>Hippocampus</tissue>
    </source>
</reference>
<reference key="5">
    <citation type="journal article" date="2006" name="Nat. Cell Biol.">
        <title>Negative regulation of ERK activity by VRK3-mediated activation of VHR phosphatase.</title>
        <authorList>
            <person name="Kang T.H."/>
            <person name="Kim K.T."/>
        </authorList>
    </citation>
    <scope>FUNCTION</scope>
    <scope>SUBCELLULAR LOCATION</scope>
    <scope>INTERACTION WITH VRK3</scope>
</reference>
<reference key="6">
    <citation type="journal article" date="2010" name="Cell">
        <title>A tissue-specific atlas of mouse protein phosphorylation and expression.</title>
        <authorList>
            <person name="Huttlin E.L."/>
            <person name="Jedrychowski M.P."/>
            <person name="Elias J.E."/>
            <person name="Goswami T."/>
            <person name="Rad R."/>
            <person name="Beausoleil S.A."/>
            <person name="Villen J."/>
            <person name="Haas W."/>
            <person name="Sowa M.E."/>
            <person name="Gygi S.P."/>
        </authorList>
    </citation>
    <scope>IDENTIFICATION BY MASS SPECTROMETRY [LARGE SCALE ANALYSIS]</scope>
    <source>
        <tissue>Brain</tissue>
        <tissue>Brown adipose tissue</tissue>
        <tissue>Heart</tissue>
        <tissue>Kidney</tissue>
        <tissue>Liver</tissue>
        <tissue>Lung</tissue>
        <tissue>Pancreas</tissue>
        <tissue>Spleen</tissue>
        <tissue>Testis</tissue>
    </source>
</reference>
<reference evidence="6" key="7">
    <citation type="journal article" date="2023" name="Cell">
        <title>De novo protein identification in mammalian sperm using in situ cryoelectron tomography and AlphaFold2 docking.</title>
        <authorList>
            <person name="Chen Z."/>
            <person name="Shiozaki M."/>
            <person name="Haas K.M."/>
            <person name="Skinner W.M."/>
            <person name="Zhao S."/>
            <person name="Guo C."/>
            <person name="Polacco B.J."/>
            <person name="Yu Z."/>
            <person name="Krogan N.J."/>
            <person name="Lishko P.V."/>
            <person name="Kaake R.M."/>
            <person name="Vale R.D."/>
            <person name="Agard D.A."/>
        </authorList>
    </citation>
    <scope>STRUCTURE BY ELECTRON MICROSCOPY (7.70 ANGSTROMS) OF SPERM FLAGELLAR DOUBLET MICROTUBULES</scope>
    <scope>FUNCTION</scope>
    <scope>SUBCELLULAR LOCATION</scope>
    <scope>SUBUNIT</scope>
</reference>
<evidence type="ECO:0000255" key="1">
    <source>
        <dbReference type="PROSITE-ProRule" id="PRU00160"/>
    </source>
</evidence>
<evidence type="ECO:0000255" key="2">
    <source>
        <dbReference type="PROSITE-ProRule" id="PRU10044"/>
    </source>
</evidence>
<evidence type="ECO:0000269" key="3">
    <source>
    </source>
</evidence>
<evidence type="ECO:0000269" key="4">
    <source>
    </source>
</evidence>
<evidence type="ECO:0000305" key="5"/>
<evidence type="ECO:0007744" key="6">
    <source>
        <dbReference type="PDB" id="8TO0"/>
    </source>
</evidence>
<comment type="function">
    <text evidence="3">Shows activity both for tyrosine-protein phosphate and serine-protein phosphate, but displays a strong preference toward phosphotyrosines (PubMed:16845380). Specifically dephosphorylates and inactivates ERK1 and ERK2 (PubMed:16845380).</text>
</comment>
<comment type="catalytic activity">
    <reaction evidence="2">
        <text>O-phospho-L-tyrosyl-[protein] + H2O = L-tyrosyl-[protein] + phosphate</text>
        <dbReference type="Rhea" id="RHEA:10684"/>
        <dbReference type="Rhea" id="RHEA-COMP:10136"/>
        <dbReference type="Rhea" id="RHEA-COMP:20101"/>
        <dbReference type="ChEBI" id="CHEBI:15377"/>
        <dbReference type="ChEBI" id="CHEBI:43474"/>
        <dbReference type="ChEBI" id="CHEBI:46858"/>
        <dbReference type="ChEBI" id="CHEBI:61978"/>
        <dbReference type="EC" id="3.1.3.48"/>
    </reaction>
</comment>
<comment type="catalytic activity">
    <reaction>
        <text>O-phospho-L-seryl-[protein] + H2O = L-seryl-[protein] + phosphate</text>
        <dbReference type="Rhea" id="RHEA:20629"/>
        <dbReference type="Rhea" id="RHEA-COMP:9863"/>
        <dbReference type="Rhea" id="RHEA-COMP:11604"/>
        <dbReference type="ChEBI" id="CHEBI:15377"/>
        <dbReference type="ChEBI" id="CHEBI:29999"/>
        <dbReference type="ChEBI" id="CHEBI:43474"/>
        <dbReference type="ChEBI" id="CHEBI:83421"/>
        <dbReference type="EC" id="3.1.3.16"/>
    </reaction>
</comment>
<comment type="catalytic activity">
    <reaction>
        <text>O-phospho-L-threonyl-[protein] + H2O = L-threonyl-[protein] + phosphate</text>
        <dbReference type="Rhea" id="RHEA:47004"/>
        <dbReference type="Rhea" id="RHEA-COMP:11060"/>
        <dbReference type="Rhea" id="RHEA-COMP:11605"/>
        <dbReference type="ChEBI" id="CHEBI:15377"/>
        <dbReference type="ChEBI" id="CHEBI:30013"/>
        <dbReference type="ChEBI" id="CHEBI:43474"/>
        <dbReference type="ChEBI" id="CHEBI:61977"/>
        <dbReference type="EC" id="3.1.3.16"/>
    </reaction>
</comment>
<comment type="subunit">
    <text evidence="3 4">Microtubule inner protein component of sperm flagellar doublet microtubules (PubMed:37865089). Interacts with VRK3; this interaction activates DUSP3 phosphatase activity (PubMed:16845380).</text>
</comment>
<comment type="subcellular location">
    <subcellularLocation>
        <location evidence="3">Nucleus</location>
    </subcellularLocation>
    <subcellularLocation>
        <location evidence="4">Cytoplasm</location>
        <location evidence="4">Cytoskeleton</location>
        <location evidence="4">Flagellum axoneme</location>
    </subcellularLocation>
</comment>
<comment type="similarity">
    <text evidence="5">Belongs to the protein-tyrosine phosphatase family. Non-receptor class dual specificity subfamily.</text>
</comment>
<protein>
    <recommendedName>
        <fullName>Dual specificity protein phosphatase 3</fullName>
        <ecNumber>3.1.3.16</ecNumber>
        <ecNumber>3.1.3.48</ecNumber>
    </recommendedName>
    <alternativeName>
        <fullName>T-DSP11</fullName>
    </alternativeName>
    <alternativeName>
        <fullName>Vaccinia H1-related phosphatase</fullName>
        <shortName>VHR</shortName>
    </alternativeName>
</protein>
<organism>
    <name type="scientific">Mus musculus</name>
    <name type="common">Mouse</name>
    <dbReference type="NCBI Taxonomy" id="10090"/>
    <lineage>
        <taxon>Eukaryota</taxon>
        <taxon>Metazoa</taxon>
        <taxon>Chordata</taxon>
        <taxon>Craniata</taxon>
        <taxon>Vertebrata</taxon>
        <taxon>Euteleostomi</taxon>
        <taxon>Mammalia</taxon>
        <taxon>Eutheria</taxon>
        <taxon>Euarchontoglires</taxon>
        <taxon>Glires</taxon>
        <taxon>Rodentia</taxon>
        <taxon>Myomorpha</taxon>
        <taxon>Muroidea</taxon>
        <taxon>Muridae</taxon>
        <taxon>Murinae</taxon>
        <taxon>Mus</taxon>
        <taxon>Mus</taxon>
    </lineage>
</organism>
<dbReference type="EC" id="3.1.3.16"/>
<dbReference type="EC" id="3.1.3.48"/>
<dbReference type="EMBL" id="AF280809">
    <property type="protein sequence ID" value="AAK69507.1"/>
    <property type="molecule type" value="mRNA"/>
</dbReference>
<dbReference type="EMBL" id="AK008734">
    <property type="protein sequence ID" value="BAB25864.1"/>
    <property type="molecule type" value="mRNA"/>
</dbReference>
<dbReference type="EMBL" id="BC016269">
    <property type="protein sequence ID" value="AAH16269.1"/>
    <property type="molecule type" value="mRNA"/>
</dbReference>
<dbReference type="CCDS" id="CCDS25482.1"/>
<dbReference type="RefSeq" id="NP_082483.1">
    <property type="nucleotide sequence ID" value="NM_028207.3"/>
</dbReference>
<dbReference type="PDB" id="8TO0">
    <property type="method" value="EM"/>
    <property type="resolution" value="7.70 A"/>
    <property type="chains" value="Fx/Fy/Fz=1-185"/>
</dbReference>
<dbReference type="PDBsum" id="8TO0"/>
<dbReference type="EMDB" id="EMD-41431"/>
<dbReference type="SMR" id="Q9D7X3"/>
<dbReference type="BioGRID" id="215327">
    <property type="interactions" value="7"/>
</dbReference>
<dbReference type="FunCoup" id="Q9D7X3">
    <property type="interactions" value="1679"/>
</dbReference>
<dbReference type="IntAct" id="Q9D7X3">
    <property type="interactions" value="4"/>
</dbReference>
<dbReference type="MINT" id="Q9D7X3"/>
<dbReference type="STRING" id="10090.ENSMUSP00000102790"/>
<dbReference type="iPTMnet" id="Q9D7X3"/>
<dbReference type="PhosphoSitePlus" id="Q9D7X3"/>
<dbReference type="SwissPalm" id="Q9D7X3"/>
<dbReference type="jPOST" id="Q9D7X3"/>
<dbReference type="PaxDb" id="10090-ENSMUSP00000003612"/>
<dbReference type="ProteomicsDB" id="277533"/>
<dbReference type="Pumba" id="Q9D7X3"/>
<dbReference type="DNASU" id="72349"/>
<dbReference type="Ensembl" id="ENSMUST00000003612.13">
    <property type="protein sequence ID" value="ENSMUSP00000003612.7"/>
    <property type="gene ID" value="ENSMUSG00000003518.14"/>
</dbReference>
<dbReference type="Ensembl" id="ENSMUST00000107172.8">
    <property type="protein sequence ID" value="ENSMUSP00000102790.2"/>
    <property type="gene ID" value="ENSMUSG00000003518.14"/>
</dbReference>
<dbReference type="GeneID" id="72349"/>
<dbReference type="KEGG" id="mmu:72349"/>
<dbReference type="UCSC" id="uc007lqa.2">
    <property type="organism name" value="mouse"/>
</dbReference>
<dbReference type="AGR" id="MGI:1919599"/>
<dbReference type="CTD" id="1845"/>
<dbReference type="MGI" id="MGI:1919599">
    <property type="gene designation" value="Dusp3"/>
</dbReference>
<dbReference type="VEuPathDB" id="HostDB:ENSMUSG00000003518"/>
<dbReference type="eggNOG" id="KOG1716">
    <property type="taxonomic scope" value="Eukaryota"/>
</dbReference>
<dbReference type="GeneTree" id="ENSGT00940000163690"/>
<dbReference type="InParanoid" id="Q9D7X3"/>
<dbReference type="TreeFam" id="TF105128"/>
<dbReference type="Reactome" id="R-MMU-202670">
    <property type="pathway name" value="ERKs are inactivated"/>
</dbReference>
<dbReference type="BioGRID-ORCS" id="72349">
    <property type="hits" value="4 hits in 78 CRISPR screens"/>
</dbReference>
<dbReference type="ChiTaRS" id="Dusp3">
    <property type="organism name" value="mouse"/>
</dbReference>
<dbReference type="PRO" id="PR:Q9D7X3"/>
<dbReference type="Proteomes" id="UP000000589">
    <property type="component" value="Chromosome 11"/>
</dbReference>
<dbReference type="RNAct" id="Q9D7X3">
    <property type="molecule type" value="protein"/>
</dbReference>
<dbReference type="Bgee" id="ENSMUSG00000003518">
    <property type="expression patterns" value="Expressed in ascending aorta and 249 other cell types or tissues"/>
</dbReference>
<dbReference type="ExpressionAtlas" id="Q9D7X3">
    <property type="expression patterns" value="baseline and differential"/>
</dbReference>
<dbReference type="GO" id="GO:0160110">
    <property type="term" value="C:axonemal microtubule doublet inner sheath"/>
    <property type="evidence" value="ECO:0000314"/>
    <property type="project" value="UniProtKB"/>
</dbReference>
<dbReference type="GO" id="GO:0005634">
    <property type="term" value="C:nucleus"/>
    <property type="evidence" value="ECO:0007669"/>
    <property type="project" value="UniProtKB-SubCell"/>
</dbReference>
<dbReference type="GO" id="GO:0036126">
    <property type="term" value="C:sperm flagellum"/>
    <property type="evidence" value="ECO:0000314"/>
    <property type="project" value="UniProtKB"/>
</dbReference>
<dbReference type="GO" id="GO:0004721">
    <property type="term" value="F:phosphoprotein phosphatase activity"/>
    <property type="evidence" value="ECO:0000314"/>
    <property type="project" value="MGI"/>
</dbReference>
<dbReference type="GO" id="GO:0019901">
    <property type="term" value="F:protein kinase binding"/>
    <property type="evidence" value="ECO:0000266"/>
    <property type="project" value="MGI"/>
</dbReference>
<dbReference type="GO" id="GO:0004722">
    <property type="term" value="F:protein serine/threonine phosphatase activity"/>
    <property type="evidence" value="ECO:0007669"/>
    <property type="project" value="UniProtKB-EC"/>
</dbReference>
<dbReference type="GO" id="GO:0004725">
    <property type="term" value="F:protein tyrosine phosphatase activity"/>
    <property type="evidence" value="ECO:0007669"/>
    <property type="project" value="UniProtKB-EC"/>
</dbReference>
<dbReference type="GO" id="GO:0008138">
    <property type="term" value="F:protein tyrosine/serine/threonine phosphatase activity"/>
    <property type="evidence" value="ECO:0000314"/>
    <property type="project" value="MGI"/>
</dbReference>
<dbReference type="GO" id="GO:0030294">
    <property type="term" value="F:receptor signaling protein tyrosine kinase inhibitor activity"/>
    <property type="evidence" value="ECO:0000315"/>
    <property type="project" value="BHF-UCL"/>
</dbReference>
<dbReference type="GO" id="GO:0071364">
    <property type="term" value="P:cellular response to epidermal growth factor stimulus"/>
    <property type="evidence" value="ECO:0000315"/>
    <property type="project" value="BHF-UCL"/>
</dbReference>
<dbReference type="GO" id="GO:0030317">
    <property type="term" value="P:flagellated sperm motility"/>
    <property type="evidence" value="ECO:0000314"/>
    <property type="project" value="UniProtKB"/>
</dbReference>
<dbReference type="GO" id="GO:0042059">
    <property type="term" value="P:negative regulation of epidermal growth factor receptor signaling pathway"/>
    <property type="evidence" value="ECO:0000315"/>
    <property type="project" value="BHF-UCL"/>
</dbReference>
<dbReference type="GO" id="GO:0051893">
    <property type="term" value="P:regulation of focal adhesion assembly"/>
    <property type="evidence" value="ECO:0000315"/>
    <property type="project" value="BHF-UCL"/>
</dbReference>
<dbReference type="CDD" id="cd14579">
    <property type="entry name" value="DUSP3"/>
    <property type="match status" value="1"/>
</dbReference>
<dbReference type="FunFam" id="3.90.190.10:FF:000065">
    <property type="entry name" value="Dual specificity protein phosphatase 3"/>
    <property type="match status" value="1"/>
</dbReference>
<dbReference type="Gene3D" id="3.90.190.10">
    <property type="entry name" value="Protein tyrosine phosphatase superfamily"/>
    <property type="match status" value="1"/>
</dbReference>
<dbReference type="InterPro" id="IPR020405">
    <property type="entry name" value="Atypical_DUSP_subfamA"/>
</dbReference>
<dbReference type="InterPro" id="IPR000340">
    <property type="entry name" value="Dual-sp_phosphatase_cat-dom"/>
</dbReference>
<dbReference type="InterPro" id="IPR029021">
    <property type="entry name" value="Prot-tyrosine_phosphatase-like"/>
</dbReference>
<dbReference type="InterPro" id="IPR016130">
    <property type="entry name" value="Tyr_Pase_AS"/>
</dbReference>
<dbReference type="InterPro" id="IPR000387">
    <property type="entry name" value="Tyr_Pase_dom"/>
</dbReference>
<dbReference type="InterPro" id="IPR020422">
    <property type="entry name" value="TYR_PHOSPHATASE_DUAL_dom"/>
</dbReference>
<dbReference type="PANTHER" id="PTHR45682">
    <property type="entry name" value="AGAP008228-PA"/>
    <property type="match status" value="1"/>
</dbReference>
<dbReference type="PANTHER" id="PTHR45682:SF1">
    <property type="entry name" value="DUAL SPECIFICITY PROTEIN PHOSPHATASE 3"/>
    <property type="match status" value="1"/>
</dbReference>
<dbReference type="Pfam" id="PF00782">
    <property type="entry name" value="DSPc"/>
    <property type="match status" value="1"/>
</dbReference>
<dbReference type="PRINTS" id="PR01908">
    <property type="entry name" value="ADSPHPHTASE"/>
</dbReference>
<dbReference type="PRINTS" id="PR01909">
    <property type="entry name" value="ADSPHPHTASEA"/>
</dbReference>
<dbReference type="SMART" id="SM00195">
    <property type="entry name" value="DSPc"/>
    <property type="match status" value="1"/>
</dbReference>
<dbReference type="SUPFAM" id="SSF52799">
    <property type="entry name" value="(Phosphotyrosine protein) phosphatases II"/>
    <property type="match status" value="1"/>
</dbReference>
<dbReference type="PROSITE" id="PS00383">
    <property type="entry name" value="TYR_PHOSPHATASE_1"/>
    <property type="match status" value="1"/>
</dbReference>
<dbReference type="PROSITE" id="PS50056">
    <property type="entry name" value="TYR_PHOSPHATASE_2"/>
    <property type="match status" value="1"/>
</dbReference>
<dbReference type="PROSITE" id="PS50054">
    <property type="entry name" value="TYR_PHOSPHATASE_DUAL"/>
    <property type="match status" value="1"/>
</dbReference>
<proteinExistence type="evidence at protein level"/>
<accession>Q9D7X3</accession>